<evidence type="ECO:0000303" key="1">
    <source>
    </source>
</evidence>
<evidence type="ECO:0000305" key="2"/>
<evidence type="ECO:0007744" key="3">
    <source>
    </source>
</evidence>
<protein>
    <recommendedName>
        <fullName evidence="1">Small ribosomal subunit protein eS21y</fullName>
    </recommendedName>
    <alternativeName>
        <fullName>40S ribosomal protein S21-2</fullName>
    </alternativeName>
</protein>
<comment type="similarity">
    <text evidence="2">Belongs to the eukaryotic ribosomal protein eS21 family.</text>
</comment>
<comment type="sequence caution" evidence="2">
    <conflict type="frameshift">
        <sequence resource="EMBL-CDS" id="ABK32166"/>
    </conflict>
</comment>
<comment type="sequence caution" evidence="2">
    <conflict type="frameshift">
        <sequence resource="EMBL" id="AC069556"/>
    </conflict>
</comment>
<dbReference type="EMBL" id="AC069556">
    <property type="status" value="NOT_ANNOTATED_CDS"/>
    <property type="molecule type" value="Genomic_DNA"/>
</dbReference>
<dbReference type="EMBL" id="CP002688">
    <property type="protein sequence ID" value="AED93716.1"/>
    <property type="molecule type" value="Genomic_DNA"/>
</dbReference>
<dbReference type="EMBL" id="BX831050">
    <property type="status" value="NOT_ANNOTATED_CDS"/>
    <property type="molecule type" value="mRNA"/>
</dbReference>
<dbReference type="EMBL" id="BT029352">
    <property type="protein sequence ID" value="ABK32166.1"/>
    <property type="status" value="ALT_FRAME"/>
    <property type="molecule type" value="mRNA"/>
</dbReference>
<dbReference type="EMBL" id="AY080873">
    <property type="status" value="NOT_ANNOTATED_CDS"/>
    <property type="molecule type" value="mRNA"/>
</dbReference>
<dbReference type="EMBL" id="AY089203">
    <property type="status" value="NOT_ANNOTATED_CDS"/>
    <property type="molecule type" value="mRNA"/>
</dbReference>
<dbReference type="RefSeq" id="NP_198122.4">
    <property type="nucleotide sequence ID" value="NM_122652.7"/>
</dbReference>
<dbReference type="SMR" id="Q3E902"/>
<dbReference type="BioGRID" id="18106">
    <property type="interactions" value="1"/>
</dbReference>
<dbReference type="FunCoup" id="Q3E902">
    <property type="interactions" value="3246"/>
</dbReference>
<dbReference type="STRING" id="3702.Q3E902"/>
<dbReference type="iPTMnet" id="Q3E902"/>
<dbReference type="PaxDb" id="3702-AT5G27700.1"/>
<dbReference type="ProteomicsDB" id="226792"/>
<dbReference type="EnsemblPlants" id="AT5G27700.1">
    <property type="protein sequence ID" value="AT5G27700.1"/>
    <property type="gene ID" value="AT5G27700"/>
</dbReference>
<dbReference type="GeneID" id="832832"/>
<dbReference type="Gramene" id="AT5G27700.1">
    <property type="protein sequence ID" value="AT5G27700.1"/>
    <property type="gene ID" value="AT5G27700"/>
</dbReference>
<dbReference type="KEGG" id="ath:AT5G27700"/>
<dbReference type="Araport" id="AT5G27700"/>
<dbReference type="TAIR" id="AT5G27700">
    <property type="gene designation" value="EVR1L1"/>
</dbReference>
<dbReference type="eggNOG" id="KOG3486">
    <property type="taxonomic scope" value="Eukaryota"/>
</dbReference>
<dbReference type="HOGENOM" id="CLU_167122_1_0_1"/>
<dbReference type="InParanoid" id="Q3E902"/>
<dbReference type="OMA" id="AMDRLWQ"/>
<dbReference type="OrthoDB" id="1027799at2759"/>
<dbReference type="PRO" id="PR:Q3E902"/>
<dbReference type="Proteomes" id="UP000006548">
    <property type="component" value="Chromosome 5"/>
</dbReference>
<dbReference type="ExpressionAtlas" id="Q3E902">
    <property type="expression patterns" value="baseline and differential"/>
</dbReference>
<dbReference type="GO" id="GO:0005829">
    <property type="term" value="C:cytosol"/>
    <property type="evidence" value="ECO:0000314"/>
    <property type="project" value="TAIR"/>
</dbReference>
<dbReference type="GO" id="GO:0022627">
    <property type="term" value="C:cytosolic small ribosomal subunit"/>
    <property type="evidence" value="ECO:0007005"/>
    <property type="project" value="TAIR"/>
</dbReference>
<dbReference type="GO" id="GO:0005634">
    <property type="term" value="C:nucleus"/>
    <property type="evidence" value="ECO:0000314"/>
    <property type="project" value="TAIR"/>
</dbReference>
<dbReference type="GO" id="GO:0009536">
    <property type="term" value="C:plastid"/>
    <property type="evidence" value="ECO:0007005"/>
    <property type="project" value="TAIR"/>
</dbReference>
<dbReference type="GO" id="GO:0003735">
    <property type="term" value="F:structural constituent of ribosome"/>
    <property type="evidence" value="ECO:0000314"/>
    <property type="project" value="CAFA"/>
</dbReference>
<dbReference type="GO" id="GO:0006412">
    <property type="term" value="P:translation"/>
    <property type="evidence" value="ECO:0007669"/>
    <property type="project" value="InterPro"/>
</dbReference>
<dbReference type="FunFam" id="3.30.1230.20:FF:000002">
    <property type="entry name" value="40S ribosomal protein S21"/>
    <property type="match status" value="1"/>
</dbReference>
<dbReference type="Gene3D" id="3.30.1230.20">
    <property type="match status" value="1"/>
</dbReference>
<dbReference type="InterPro" id="IPR001931">
    <property type="entry name" value="Ribosomal_eS21"/>
</dbReference>
<dbReference type="InterPro" id="IPR018279">
    <property type="entry name" value="Ribosomal_eS21_CS"/>
</dbReference>
<dbReference type="InterPro" id="IPR038579">
    <property type="entry name" value="Ribosomal_eS21_sf"/>
</dbReference>
<dbReference type="PANTHER" id="PTHR10442">
    <property type="entry name" value="40S RIBOSOMAL PROTEIN S21"/>
    <property type="match status" value="1"/>
</dbReference>
<dbReference type="Pfam" id="PF01249">
    <property type="entry name" value="Ribosomal_S21e"/>
    <property type="match status" value="1"/>
</dbReference>
<dbReference type="PIRSF" id="PIRSF002148">
    <property type="entry name" value="Ribosomal_S21e"/>
    <property type="match status" value="1"/>
</dbReference>
<dbReference type="PROSITE" id="PS00996">
    <property type="entry name" value="RIBOSOMAL_S21E"/>
    <property type="match status" value="1"/>
</dbReference>
<name>RS212_ARATH</name>
<sequence>MQNEEGQVTELYIPRKCSATNRLITSKDHASVQLNIGHLDANGLYTGQFTTFALCGFVRAQGDADSGVDRLWQKKKVEAKQN</sequence>
<feature type="chain" id="PRO_0000250532" description="Small ribosomal subunit protein eS21y">
    <location>
        <begin position="1"/>
        <end position="82"/>
    </location>
</feature>
<feature type="modified residue" description="N-acetylmethionine" evidence="3">
    <location>
        <position position="1"/>
    </location>
</feature>
<reference key="1">
    <citation type="journal article" date="2000" name="Nature">
        <title>Sequence and analysis of chromosome 5 of the plant Arabidopsis thaliana.</title>
        <authorList>
            <person name="Tabata S."/>
            <person name="Kaneko T."/>
            <person name="Nakamura Y."/>
            <person name="Kotani H."/>
            <person name="Kato T."/>
            <person name="Asamizu E."/>
            <person name="Miyajima N."/>
            <person name="Sasamoto S."/>
            <person name="Kimura T."/>
            <person name="Hosouchi T."/>
            <person name="Kawashima K."/>
            <person name="Kohara M."/>
            <person name="Matsumoto M."/>
            <person name="Matsuno A."/>
            <person name="Muraki A."/>
            <person name="Nakayama S."/>
            <person name="Nakazaki N."/>
            <person name="Naruo K."/>
            <person name="Okumura S."/>
            <person name="Shinpo S."/>
            <person name="Takeuchi C."/>
            <person name="Wada T."/>
            <person name="Watanabe A."/>
            <person name="Yamada M."/>
            <person name="Yasuda M."/>
            <person name="Sato S."/>
            <person name="de la Bastide M."/>
            <person name="Huang E."/>
            <person name="Spiegel L."/>
            <person name="Gnoj L."/>
            <person name="O'Shaughnessy A."/>
            <person name="Preston R."/>
            <person name="Habermann K."/>
            <person name="Murray J."/>
            <person name="Johnson D."/>
            <person name="Rohlfing T."/>
            <person name="Nelson J."/>
            <person name="Stoneking T."/>
            <person name="Pepin K."/>
            <person name="Spieth J."/>
            <person name="Sekhon M."/>
            <person name="Armstrong J."/>
            <person name="Becker M."/>
            <person name="Belter E."/>
            <person name="Cordum H."/>
            <person name="Cordes M."/>
            <person name="Courtney L."/>
            <person name="Courtney W."/>
            <person name="Dante M."/>
            <person name="Du H."/>
            <person name="Edwards J."/>
            <person name="Fryman J."/>
            <person name="Haakensen B."/>
            <person name="Lamar E."/>
            <person name="Latreille P."/>
            <person name="Leonard S."/>
            <person name="Meyer R."/>
            <person name="Mulvaney E."/>
            <person name="Ozersky P."/>
            <person name="Riley A."/>
            <person name="Strowmatt C."/>
            <person name="Wagner-McPherson C."/>
            <person name="Wollam A."/>
            <person name="Yoakum M."/>
            <person name="Bell M."/>
            <person name="Dedhia N."/>
            <person name="Parnell L."/>
            <person name="Shah R."/>
            <person name="Rodriguez M."/>
            <person name="Hoon See L."/>
            <person name="Vil D."/>
            <person name="Baker J."/>
            <person name="Kirchoff K."/>
            <person name="Toth K."/>
            <person name="King L."/>
            <person name="Bahret A."/>
            <person name="Miller B."/>
            <person name="Marra M.A."/>
            <person name="Martienssen R."/>
            <person name="McCombie W.R."/>
            <person name="Wilson R.K."/>
            <person name="Murphy G."/>
            <person name="Bancroft I."/>
            <person name="Volckaert G."/>
            <person name="Wambutt R."/>
            <person name="Duesterhoeft A."/>
            <person name="Stiekema W."/>
            <person name="Pohl T."/>
            <person name="Entian K.-D."/>
            <person name="Terryn N."/>
            <person name="Hartley N."/>
            <person name="Bent E."/>
            <person name="Johnson S."/>
            <person name="Langham S.-A."/>
            <person name="McCullagh B."/>
            <person name="Robben J."/>
            <person name="Grymonprez B."/>
            <person name="Zimmermann W."/>
            <person name="Ramsperger U."/>
            <person name="Wedler H."/>
            <person name="Balke K."/>
            <person name="Wedler E."/>
            <person name="Peters S."/>
            <person name="van Staveren M."/>
            <person name="Dirkse W."/>
            <person name="Mooijman P."/>
            <person name="Klein Lankhorst R."/>
            <person name="Weitzenegger T."/>
            <person name="Bothe G."/>
            <person name="Rose M."/>
            <person name="Hauf J."/>
            <person name="Berneiser S."/>
            <person name="Hempel S."/>
            <person name="Feldpausch M."/>
            <person name="Lamberth S."/>
            <person name="Villarroel R."/>
            <person name="Gielen J."/>
            <person name="Ardiles W."/>
            <person name="Bents O."/>
            <person name="Lemcke K."/>
            <person name="Kolesov G."/>
            <person name="Mayer K.F.X."/>
            <person name="Rudd S."/>
            <person name="Schoof H."/>
            <person name="Schueller C."/>
            <person name="Zaccaria P."/>
            <person name="Mewes H.-W."/>
            <person name="Bevan M."/>
            <person name="Fransz P.F."/>
        </authorList>
    </citation>
    <scope>NUCLEOTIDE SEQUENCE [LARGE SCALE GENOMIC DNA]</scope>
    <source>
        <strain>cv. Columbia</strain>
    </source>
</reference>
<reference key="2">
    <citation type="journal article" date="2017" name="Plant J.">
        <title>Araport11: a complete reannotation of the Arabidopsis thaliana reference genome.</title>
        <authorList>
            <person name="Cheng C.Y."/>
            <person name="Krishnakumar V."/>
            <person name="Chan A.P."/>
            <person name="Thibaud-Nissen F."/>
            <person name="Schobel S."/>
            <person name="Town C.D."/>
        </authorList>
    </citation>
    <scope>GENOME REANNOTATION</scope>
    <scope>SEQUENCE REVISION</scope>
    <source>
        <strain>cv. Columbia</strain>
    </source>
</reference>
<reference key="3">
    <citation type="journal article" date="2004" name="Genome Res.">
        <title>Whole genome sequence comparisons and 'full-length' cDNA sequences: a combined approach to evaluate and improve Arabidopsis genome annotation.</title>
        <authorList>
            <person name="Castelli V."/>
            <person name="Aury J.-M."/>
            <person name="Jaillon O."/>
            <person name="Wincker P."/>
            <person name="Clepet C."/>
            <person name="Menard M."/>
            <person name="Cruaud C."/>
            <person name="Quetier F."/>
            <person name="Scarpelli C."/>
            <person name="Schaechter V."/>
            <person name="Temple G."/>
            <person name="Caboche M."/>
            <person name="Weissenbach J."/>
            <person name="Salanoubat M."/>
        </authorList>
    </citation>
    <scope>NUCLEOTIDE SEQUENCE [LARGE SCALE MRNA]</scope>
    <source>
        <strain>cv. Columbia</strain>
    </source>
</reference>
<reference key="4">
    <citation type="submission" date="2006-11" db="EMBL/GenBank/DDBJ databases">
        <title>Arabidopsis ORF clones.</title>
        <authorList>
            <person name="Bautista V.R."/>
            <person name="Kim C.J."/>
            <person name="Chen H."/>
            <person name="Quinitio C."/>
            <person name="Ecker J.R."/>
        </authorList>
    </citation>
    <scope>NUCLEOTIDE SEQUENCE [LARGE SCALE MRNA]</scope>
    <source>
        <strain>cv. Columbia</strain>
    </source>
</reference>
<reference key="5">
    <citation type="submission" date="2002-03" db="EMBL/GenBank/DDBJ databases">
        <title>Full-length cDNA from Arabidopsis thaliana.</title>
        <authorList>
            <person name="Brover V.V."/>
            <person name="Troukhan M.E."/>
            <person name="Alexandrov N.A."/>
            <person name="Lu Y.-P."/>
            <person name="Flavell R.B."/>
            <person name="Feldmann K.A."/>
        </authorList>
    </citation>
    <scope>NUCLEOTIDE SEQUENCE [LARGE SCALE MRNA]</scope>
</reference>
<reference key="6">
    <citation type="journal article" date="2001" name="Plant Physiol.">
        <title>The organization of cytoplasmic ribosomal protein genes in the Arabidopsis genome.</title>
        <authorList>
            <person name="Barakat A."/>
            <person name="Szick-Miranda K."/>
            <person name="Chang I.-F."/>
            <person name="Guyot R."/>
            <person name="Blanc G."/>
            <person name="Cooke R."/>
            <person name="Delseny M."/>
            <person name="Bailey-Serres J."/>
        </authorList>
    </citation>
    <scope>GENE FAMILY ORGANIZATION</scope>
    <scope>NOMENCLATURE</scope>
</reference>
<reference key="7">
    <citation type="journal article" date="2012" name="Mol. Cell. Proteomics">
        <title>Comparative large-scale characterisation of plant vs. mammal proteins reveals similar and idiosyncratic N-alpha acetylation features.</title>
        <authorList>
            <person name="Bienvenut W.V."/>
            <person name="Sumpton D."/>
            <person name="Martinez A."/>
            <person name="Lilla S."/>
            <person name="Espagne C."/>
            <person name="Meinnel T."/>
            <person name="Giglione C."/>
        </authorList>
    </citation>
    <scope>ACETYLATION [LARGE SCALE ANALYSIS] AT MET-1</scope>
    <scope>IDENTIFICATION BY MASS SPECTROMETRY [LARGE SCALE ANALYSIS]</scope>
</reference>
<reference key="8">
    <citation type="journal article" date="2023" name="Plant Cell">
        <title>An updated nomenclature for plant ribosomal protein genes.</title>
        <authorList>
            <person name="Scarpin M.R."/>
            <person name="Busche M."/>
            <person name="Martinez R.E."/>
            <person name="Harper L.C."/>
            <person name="Reiser L."/>
            <person name="Szakonyi D."/>
            <person name="Merchante C."/>
            <person name="Lan T."/>
            <person name="Xiong W."/>
            <person name="Mo B."/>
            <person name="Tang G."/>
            <person name="Chen X."/>
            <person name="Bailey-Serres J."/>
            <person name="Browning K.S."/>
            <person name="Brunkard J.O."/>
        </authorList>
    </citation>
    <scope>NOMENCLATURE</scope>
</reference>
<proteinExistence type="evidence at protein level"/>
<accession>Q3E902</accession>
<accession>A0JPY2</accession>
<accession>F4K4E1</accession>
<keyword id="KW-0007">Acetylation</keyword>
<keyword id="KW-1185">Reference proteome</keyword>
<keyword id="KW-0687">Ribonucleoprotein</keyword>
<keyword id="KW-0689">Ribosomal protein</keyword>
<gene>
    <name type="primary">RPS21C</name>
    <name type="ordered locus">At5g27700</name>
    <name type="ORF">T1G16.30</name>
</gene>
<organism>
    <name type="scientific">Arabidopsis thaliana</name>
    <name type="common">Mouse-ear cress</name>
    <dbReference type="NCBI Taxonomy" id="3702"/>
    <lineage>
        <taxon>Eukaryota</taxon>
        <taxon>Viridiplantae</taxon>
        <taxon>Streptophyta</taxon>
        <taxon>Embryophyta</taxon>
        <taxon>Tracheophyta</taxon>
        <taxon>Spermatophyta</taxon>
        <taxon>Magnoliopsida</taxon>
        <taxon>eudicotyledons</taxon>
        <taxon>Gunneridae</taxon>
        <taxon>Pentapetalae</taxon>
        <taxon>rosids</taxon>
        <taxon>malvids</taxon>
        <taxon>Brassicales</taxon>
        <taxon>Brassicaceae</taxon>
        <taxon>Camelineae</taxon>
        <taxon>Arabidopsis</taxon>
    </lineage>
</organism>